<dbReference type="EC" id="3.1.3.62" evidence="4 5"/>
<dbReference type="EC" id="3.1.3.80" evidence="1"/>
<dbReference type="EMBL" id="AF046908">
    <property type="protein sequence ID" value="AAD02434.1"/>
    <property type="molecule type" value="mRNA"/>
</dbReference>
<dbReference type="EMBL" id="AB041574">
    <property type="protein sequence ID" value="BAA95058.1"/>
    <property type="status" value="ALT_FRAME"/>
    <property type="molecule type" value="mRNA"/>
</dbReference>
<dbReference type="EMBL" id="AK151486">
    <property type="protein sequence ID" value="BAE30439.1"/>
    <property type="molecule type" value="mRNA"/>
</dbReference>
<dbReference type="EMBL" id="BC021437">
    <property type="protein sequence ID" value="AAH21437.1"/>
    <property type="molecule type" value="mRNA"/>
</dbReference>
<dbReference type="CCDS" id="CCDS29751.1"/>
<dbReference type="RefSeq" id="NP_034929.1">
    <property type="nucleotide sequence ID" value="NM_010799.2"/>
</dbReference>
<dbReference type="SMR" id="Q9Z2L6"/>
<dbReference type="FunCoup" id="Q9Z2L6">
    <property type="interactions" value="2245"/>
</dbReference>
<dbReference type="STRING" id="10090.ENSMUSP00000025827"/>
<dbReference type="GlyConnect" id="2518">
    <property type="glycosylation" value="6 N-Linked glycans (1 site)"/>
</dbReference>
<dbReference type="GlyCosmos" id="Q9Z2L6">
    <property type="glycosylation" value="2 sites, 6 glycans"/>
</dbReference>
<dbReference type="GlyGen" id="Q9Z2L6">
    <property type="glycosylation" value="2 sites, 8 N-linked glycans (2 sites)"/>
</dbReference>
<dbReference type="iPTMnet" id="Q9Z2L6"/>
<dbReference type="PhosphoSitePlus" id="Q9Z2L6"/>
<dbReference type="SwissPalm" id="Q9Z2L6"/>
<dbReference type="CPTAC" id="non-CPTAC-3474"/>
<dbReference type="PaxDb" id="10090-ENSMUSP00000025827"/>
<dbReference type="PeptideAtlas" id="Q9Z2L6"/>
<dbReference type="ProteomicsDB" id="252564"/>
<dbReference type="Pumba" id="Q9Z2L6"/>
<dbReference type="Antibodypedia" id="16040">
    <property type="antibodies" value="315 antibodies from 31 providers"/>
</dbReference>
<dbReference type="Ensembl" id="ENSMUST00000025827.10">
    <property type="protein sequence ID" value="ENSMUSP00000025827.9"/>
    <property type="gene ID" value="ENSMUSG00000024896.10"/>
</dbReference>
<dbReference type="GeneID" id="17330"/>
<dbReference type="KEGG" id="mmu:17330"/>
<dbReference type="UCSC" id="uc008hfk.2">
    <property type="organism name" value="mouse"/>
</dbReference>
<dbReference type="AGR" id="MGI:1336159"/>
<dbReference type="CTD" id="9562"/>
<dbReference type="MGI" id="MGI:1336159">
    <property type="gene designation" value="Minpp1"/>
</dbReference>
<dbReference type="VEuPathDB" id="HostDB:ENSMUSG00000024896"/>
<dbReference type="eggNOG" id="KOG1382">
    <property type="taxonomic scope" value="Eukaryota"/>
</dbReference>
<dbReference type="GeneTree" id="ENSGT00390000018409"/>
<dbReference type="HOGENOM" id="CLU_029165_3_1_1"/>
<dbReference type="InParanoid" id="Q9Z2L6"/>
<dbReference type="OMA" id="ANSPWFA"/>
<dbReference type="OrthoDB" id="6509975at2759"/>
<dbReference type="PhylomeDB" id="Q9Z2L6"/>
<dbReference type="TreeFam" id="TF324072"/>
<dbReference type="BRENDA" id="3.1.3.62">
    <property type="organism ID" value="3474"/>
</dbReference>
<dbReference type="Reactome" id="R-MMU-1855231">
    <property type="pathway name" value="Synthesis of IPs in the ER lumen"/>
</dbReference>
<dbReference type="BioGRID-ORCS" id="17330">
    <property type="hits" value="4 hits in 79 CRISPR screens"/>
</dbReference>
<dbReference type="ChiTaRS" id="Minpp1">
    <property type="organism name" value="mouse"/>
</dbReference>
<dbReference type="PRO" id="PR:Q9Z2L6"/>
<dbReference type="Proteomes" id="UP000000589">
    <property type="component" value="Chromosome 19"/>
</dbReference>
<dbReference type="RNAct" id="Q9Z2L6">
    <property type="molecule type" value="protein"/>
</dbReference>
<dbReference type="Bgee" id="ENSMUSG00000024896">
    <property type="expression patterns" value="Expressed in fetal liver hematopoietic progenitor cell and 271 other cell types or tissues"/>
</dbReference>
<dbReference type="GO" id="GO:0005788">
    <property type="term" value="C:endoplasmic reticulum lumen"/>
    <property type="evidence" value="ECO:0000314"/>
    <property type="project" value="UniProtKB"/>
</dbReference>
<dbReference type="GO" id="GO:0005615">
    <property type="term" value="C:extracellular space"/>
    <property type="evidence" value="ECO:0000250"/>
    <property type="project" value="UniProtKB"/>
</dbReference>
<dbReference type="GO" id="GO:0005886">
    <property type="term" value="C:plasma membrane"/>
    <property type="evidence" value="ECO:0000314"/>
    <property type="project" value="UniProtKB"/>
</dbReference>
<dbReference type="GO" id="GO:0016158">
    <property type="term" value="F:3-phytase activity"/>
    <property type="evidence" value="ECO:0007669"/>
    <property type="project" value="RHEA"/>
</dbReference>
<dbReference type="GO" id="GO:0008707">
    <property type="term" value="F:4-phytase activity"/>
    <property type="evidence" value="ECO:0007669"/>
    <property type="project" value="RHEA"/>
</dbReference>
<dbReference type="GO" id="GO:0034417">
    <property type="term" value="F:bisphosphoglycerate 3-phosphatase activity"/>
    <property type="evidence" value="ECO:0007669"/>
    <property type="project" value="UniProtKB-EC"/>
</dbReference>
<dbReference type="GO" id="GO:0016312">
    <property type="term" value="F:inositol bisphosphate phosphatase activity"/>
    <property type="evidence" value="ECO:0000250"/>
    <property type="project" value="UniProtKB"/>
</dbReference>
<dbReference type="GO" id="GO:0052827">
    <property type="term" value="F:inositol pentakisphosphate phosphatase activity"/>
    <property type="evidence" value="ECO:0000250"/>
    <property type="project" value="UniProtKB"/>
</dbReference>
<dbReference type="GO" id="GO:0052745">
    <property type="term" value="F:inositol phosphate phosphatase activity"/>
    <property type="evidence" value="ECO:0000314"/>
    <property type="project" value="UniProtKB"/>
</dbReference>
<dbReference type="GO" id="GO:0046030">
    <property type="term" value="F:inositol trisphosphate phosphatase activity"/>
    <property type="evidence" value="ECO:0000250"/>
    <property type="project" value="UniProtKB"/>
</dbReference>
<dbReference type="GO" id="GO:0030351">
    <property type="term" value="F:inositol-1,3,4,5,6-pentakisphosphate 3-phosphatase activity"/>
    <property type="evidence" value="ECO:0000250"/>
    <property type="project" value="UniProtKB"/>
</dbReference>
<dbReference type="GO" id="GO:0030352">
    <property type="term" value="F:inositol-1,4,5,6-tetrakisphosphate 6-phosphatase activity"/>
    <property type="evidence" value="ECO:0000250"/>
    <property type="project" value="UniProtKB"/>
</dbReference>
<dbReference type="GO" id="GO:0004446">
    <property type="term" value="F:inositol-hexakisphosphate phosphatase activity"/>
    <property type="evidence" value="ECO:0000250"/>
    <property type="project" value="UniProtKB"/>
</dbReference>
<dbReference type="GO" id="GO:0030003">
    <property type="term" value="P:intracellular monoatomic cation homeostasis"/>
    <property type="evidence" value="ECO:0000315"/>
    <property type="project" value="UniProtKB"/>
</dbReference>
<dbReference type="CDD" id="cd07061">
    <property type="entry name" value="HP_HAP_like"/>
    <property type="match status" value="1"/>
</dbReference>
<dbReference type="FunFam" id="3.40.50.1240:FF:000014">
    <property type="entry name" value="Multiple inositol polyphosphate phosphatase 1"/>
    <property type="match status" value="1"/>
</dbReference>
<dbReference type="Gene3D" id="3.40.50.1240">
    <property type="entry name" value="Phosphoglycerate mutase-like"/>
    <property type="match status" value="1"/>
</dbReference>
<dbReference type="InterPro" id="IPR000560">
    <property type="entry name" value="His_Pase_clade-2"/>
</dbReference>
<dbReference type="InterPro" id="IPR029033">
    <property type="entry name" value="His_PPase_superfam"/>
</dbReference>
<dbReference type="InterPro" id="IPR016274">
    <property type="entry name" value="Histidine_acid_Pase_euk"/>
</dbReference>
<dbReference type="PANTHER" id="PTHR20963:SF8">
    <property type="entry name" value="MULTIPLE INOSITOL POLYPHOSPHATE PHOSPHATASE 1"/>
    <property type="match status" value="1"/>
</dbReference>
<dbReference type="PANTHER" id="PTHR20963">
    <property type="entry name" value="MULTIPLE INOSITOL POLYPHOSPHATE PHOSPHATASE-RELATED"/>
    <property type="match status" value="1"/>
</dbReference>
<dbReference type="Pfam" id="PF00328">
    <property type="entry name" value="His_Phos_2"/>
    <property type="match status" value="1"/>
</dbReference>
<dbReference type="PIRSF" id="PIRSF000894">
    <property type="entry name" value="Acid_phosphatase"/>
    <property type="match status" value="1"/>
</dbReference>
<dbReference type="SUPFAM" id="SSF53254">
    <property type="entry name" value="Phosphoglycerate mutase-like"/>
    <property type="match status" value="1"/>
</dbReference>
<dbReference type="PROSITE" id="PS00014">
    <property type="entry name" value="ER_TARGET"/>
    <property type="match status" value="1"/>
</dbReference>
<accession>Q9Z2L6</accession>
<accession>Q3UA76</accession>
<accession>Q8VDR0</accession>
<accession>Q9JJD5</accession>
<proteinExistence type="evidence at protein level"/>
<keyword id="KW-1003">Cell membrane</keyword>
<keyword id="KW-0256">Endoplasmic reticulum</keyword>
<keyword id="KW-0325">Glycoprotein</keyword>
<keyword id="KW-0378">Hydrolase</keyword>
<keyword id="KW-0472">Membrane</keyword>
<keyword id="KW-1185">Reference proteome</keyword>
<keyword id="KW-0964">Secreted</keyword>
<keyword id="KW-0732">Signal</keyword>
<reference key="1">
    <citation type="journal article" date="1999" name="Genomics">
        <title>Multiple inositol polyphosphate phosphatase: evolution as a distinct group within the histidine phosphatase family and chromosomal localization of the human and mouse genes to chromosomes 10q23 and 19.</title>
        <authorList>
            <person name="Chi H."/>
            <person name="Tiller G.E."/>
            <person name="Dasouki M.J."/>
            <person name="Romano P.R."/>
            <person name="Wang J."/>
            <person name="O'keefe R.J."/>
            <person name="Puzas J.E."/>
            <person name="Rosier R.N."/>
            <person name="Reynolds P.R."/>
        </authorList>
    </citation>
    <scope>NUCLEOTIDE SEQUENCE [MRNA]</scope>
    <scope>FUNCTION</scope>
    <scope>CATALYTIC ACTIVITY</scope>
    <scope>TISSUE SPECIFICITY</scope>
    <scope>ACTIVE SITE</scope>
    <scope>MUTAGENESIS OF HIS-89</scope>
    <source>
        <strain>129</strain>
    </source>
</reference>
<reference key="2">
    <citation type="submission" date="2000-04" db="EMBL/GenBank/DDBJ databases">
        <title>Isolation of full-length cDNA clones from mouse brain cDNA library made by oligo-capping method.</title>
        <authorList>
            <person name="Osada N."/>
            <person name="Kusuda J."/>
            <person name="Tanuma R."/>
            <person name="Ito A."/>
            <person name="Hirata M."/>
            <person name="Sugano S."/>
            <person name="Hashimoto K."/>
        </authorList>
    </citation>
    <scope>NUCLEOTIDE SEQUENCE [LARGE SCALE MRNA]</scope>
    <source>
        <strain>C57BL/6J</strain>
        <tissue>Brain</tissue>
    </source>
</reference>
<reference key="3">
    <citation type="journal article" date="2005" name="Science">
        <title>The transcriptional landscape of the mammalian genome.</title>
        <authorList>
            <person name="Carninci P."/>
            <person name="Kasukawa T."/>
            <person name="Katayama S."/>
            <person name="Gough J."/>
            <person name="Frith M.C."/>
            <person name="Maeda N."/>
            <person name="Oyama R."/>
            <person name="Ravasi T."/>
            <person name="Lenhard B."/>
            <person name="Wells C."/>
            <person name="Kodzius R."/>
            <person name="Shimokawa K."/>
            <person name="Bajic V.B."/>
            <person name="Brenner S.E."/>
            <person name="Batalov S."/>
            <person name="Forrest A.R."/>
            <person name="Zavolan M."/>
            <person name="Davis M.J."/>
            <person name="Wilming L.G."/>
            <person name="Aidinis V."/>
            <person name="Allen J.E."/>
            <person name="Ambesi-Impiombato A."/>
            <person name="Apweiler R."/>
            <person name="Aturaliya R.N."/>
            <person name="Bailey T.L."/>
            <person name="Bansal M."/>
            <person name="Baxter L."/>
            <person name="Beisel K.W."/>
            <person name="Bersano T."/>
            <person name="Bono H."/>
            <person name="Chalk A.M."/>
            <person name="Chiu K.P."/>
            <person name="Choudhary V."/>
            <person name="Christoffels A."/>
            <person name="Clutterbuck D.R."/>
            <person name="Crowe M.L."/>
            <person name="Dalla E."/>
            <person name="Dalrymple B.P."/>
            <person name="de Bono B."/>
            <person name="Della Gatta G."/>
            <person name="di Bernardo D."/>
            <person name="Down T."/>
            <person name="Engstrom P."/>
            <person name="Fagiolini M."/>
            <person name="Faulkner G."/>
            <person name="Fletcher C.F."/>
            <person name="Fukushima T."/>
            <person name="Furuno M."/>
            <person name="Futaki S."/>
            <person name="Gariboldi M."/>
            <person name="Georgii-Hemming P."/>
            <person name="Gingeras T.R."/>
            <person name="Gojobori T."/>
            <person name="Green R.E."/>
            <person name="Gustincich S."/>
            <person name="Harbers M."/>
            <person name="Hayashi Y."/>
            <person name="Hensch T.K."/>
            <person name="Hirokawa N."/>
            <person name="Hill D."/>
            <person name="Huminiecki L."/>
            <person name="Iacono M."/>
            <person name="Ikeo K."/>
            <person name="Iwama A."/>
            <person name="Ishikawa T."/>
            <person name="Jakt M."/>
            <person name="Kanapin A."/>
            <person name="Katoh M."/>
            <person name="Kawasawa Y."/>
            <person name="Kelso J."/>
            <person name="Kitamura H."/>
            <person name="Kitano H."/>
            <person name="Kollias G."/>
            <person name="Krishnan S.P."/>
            <person name="Kruger A."/>
            <person name="Kummerfeld S.K."/>
            <person name="Kurochkin I.V."/>
            <person name="Lareau L.F."/>
            <person name="Lazarevic D."/>
            <person name="Lipovich L."/>
            <person name="Liu J."/>
            <person name="Liuni S."/>
            <person name="McWilliam S."/>
            <person name="Madan Babu M."/>
            <person name="Madera M."/>
            <person name="Marchionni L."/>
            <person name="Matsuda H."/>
            <person name="Matsuzawa S."/>
            <person name="Miki H."/>
            <person name="Mignone F."/>
            <person name="Miyake S."/>
            <person name="Morris K."/>
            <person name="Mottagui-Tabar S."/>
            <person name="Mulder N."/>
            <person name="Nakano N."/>
            <person name="Nakauchi H."/>
            <person name="Ng P."/>
            <person name="Nilsson R."/>
            <person name="Nishiguchi S."/>
            <person name="Nishikawa S."/>
            <person name="Nori F."/>
            <person name="Ohara O."/>
            <person name="Okazaki Y."/>
            <person name="Orlando V."/>
            <person name="Pang K.C."/>
            <person name="Pavan W.J."/>
            <person name="Pavesi G."/>
            <person name="Pesole G."/>
            <person name="Petrovsky N."/>
            <person name="Piazza S."/>
            <person name="Reed J."/>
            <person name="Reid J.F."/>
            <person name="Ring B.Z."/>
            <person name="Ringwald M."/>
            <person name="Rost B."/>
            <person name="Ruan Y."/>
            <person name="Salzberg S.L."/>
            <person name="Sandelin A."/>
            <person name="Schneider C."/>
            <person name="Schoenbach C."/>
            <person name="Sekiguchi K."/>
            <person name="Semple C.A."/>
            <person name="Seno S."/>
            <person name="Sessa L."/>
            <person name="Sheng Y."/>
            <person name="Shibata Y."/>
            <person name="Shimada H."/>
            <person name="Shimada K."/>
            <person name="Silva D."/>
            <person name="Sinclair B."/>
            <person name="Sperling S."/>
            <person name="Stupka E."/>
            <person name="Sugiura K."/>
            <person name="Sultana R."/>
            <person name="Takenaka Y."/>
            <person name="Taki K."/>
            <person name="Tammoja K."/>
            <person name="Tan S.L."/>
            <person name="Tang S."/>
            <person name="Taylor M.S."/>
            <person name="Tegner J."/>
            <person name="Teichmann S.A."/>
            <person name="Ueda H.R."/>
            <person name="van Nimwegen E."/>
            <person name="Verardo R."/>
            <person name="Wei C.L."/>
            <person name="Yagi K."/>
            <person name="Yamanishi H."/>
            <person name="Zabarovsky E."/>
            <person name="Zhu S."/>
            <person name="Zimmer A."/>
            <person name="Hide W."/>
            <person name="Bult C."/>
            <person name="Grimmond S.M."/>
            <person name="Teasdale R.D."/>
            <person name="Liu E.T."/>
            <person name="Brusic V."/>
            <person name="Quackenbush J."/>
            <person name="Wahlestedt C."/>
            <person name="Mattick J.S."/>
            <person name="Hume D.A."/>
            <person name="Kai C."/>
            <person name="Sasaki D."/>
            <person name="Tomaru Y."/>
            <person name="Fukuda S."/>
            <person name="Kanamori-Katayama M."/>
            <person name="Suzuki M."/>
            <person name="Aoki J."/>
            <person name="Arakawa T."/>
            <person name="Iida J."/>
            <person name="Imamura K."/>
            <person name="Itoh M."/>
            <person name="Kato T."/>
            <person name="Kawaji H."/>
            <person name="Kawagashira N."/>
            <person name="Kawashima T."/>
            <person name="Kojima M."/>
            <person name="Kondo S."/>
            <person name="Konno H."/>
            <person name="Nakano K."/>
            <person name="Ninomiya N."/>
            <person name="Nishio T."/>
            <person name="Okada M."/>
            <person name="Plessy C."/>
            <person name="Shibata K."/>
            <person name="Shiraki T."/>
            <person name="Suzuki S."/>
            <person name="Tagami M."/>
            <person name="Waki K."/>
            <person name="Watahiki A."/>
            <person name="Okamura-Oho Y."/>
            <person name="Suzuki H."/>
            <person name="Kawai J."/>
            <person name="Hayashizaki Y."/>
        </authorList>
    </citation>
    <scope>NUCLEOTIDE SEQUENCE [LARGE SCALE MRNA]</scope>
    <source>
        <strain>C57BL/6J</strain>
        <tissue>Bone marrow</tissue>
    </source>
</reference>
<reference key="4">
    <citation type="journal article" date="2004" name="Genome Res.">
        <title>The status, quality, and expansion of the NIH full-length cDNA project: the Mammalian Gene Collection (MGC).</title>
        <authorList>
            <consortium name="The MGC Project Team"/>
        </authorList>
    </citation>
    <scope>NUCLEOTIDE SEQUENCE [LARGE SCALE MRNA]</scope>
    <source>
        <strain>Czech II</strain>
        <tissue>Mammary gland</tissue>
    </source>
</reference>
<reference key="5">
    <citation type="journal article" date="2000" name="Mol. Cell. Biol.">
        <title>Targeted deletion of Minpp1 provides new insight into the activity of multiple inositol polyphosphate phosphatase in vivo.</title>
        <authorList>
            <person name="Chi H."/>
            <person name="Yang X."/>
            <person name="Kingsley P.D."/>
            <person name="O'Keefe R.J."/>
            <person name="Puzas J.E."/>
            <person name="Rosier R.N."/>
            <person name="Shears S.B."/>
            <person name="Reynolds P.R."/>
        </authorList>
    </citation>
    <scope>FUNCTION</scope>
    <scope>CATALYTIC ACTIVITY</scope>
    <scope>SUBCELLULAR LOCATION</scope>
    <scope>DEVELOPMENTAL STAGE</scope>
    <scope>DISRUPTION PHENOTYPE</scope>
    <scope>MUTAGENESIS OF HIS-89</scope>
    <scope>MOTIF</scope>
</reference>
<reference key="6">
    <citation type="journal article" date="2010" name="Cell">
        <title>A tissue-specific atlas of mouse protein phosphorylation and expression.</title>
        <authorList>
            <person name="Huttlin E.L."/>
            <person name="Jedrychowski M.P."/>
            <person name="Elias J.E."/>
            <person name="Goswami T."/>
            <person name="Rad R."/>
            <person name="Beausoleil S.A."/>
            <person name="Villen J."/>
            <person name="Haas W."/>
            <person name="Sowa M.E."/>
            <person name="Gygi S.P."/>
        </authorList>
    </citation>
    <scope>IDENTIFICATION BY MASS SPECTROMETRY [LARGE SCALE ANALYSIS]</scope>
    <source>
        <tissue>Spleen</tissue>
        <tissue>Testis</tissue>
    </source>
</reference>
<reference key="7">
    <citation type="journal article" date="2020" name="Nat. Commun.">
        <title>MINPP1 prevents intracellular accumulation of the chelator inositol hexakisphosphate and is mutated in Pontocerebellar Hypoplasia.</title>
        <authorList>
            <person name="Ucuncu E."/>
            <person name="Rajamani K."/>
            <person name="Wilson M.S.C."/>
            <person name="Medina-Cano D."/>
            <person name="Altin N."/>
            <person name="David P."/>
            <person name="Barcia G."/>
            <person name="Lefort N."/>
            <person name="Banal C."/>
            <person name="Vasilache-Dangles M.T."/>
            <person name="Pitelet G."/>
            <person name="Lorino E."/>
            <person name="Rabasse N."/>
            <person name="Bieth E."/>
            <person name="Zaki M.S."/>
            <person name="Topcu M."/>
            <person name="Sonmez F.M."/>
            <person name="Musaev D."/>
            <person name="Stanley V."/>
            <person name="Bole-Feysot C."/>
            <person name="Nitschke P."/>
            <person name="Munnich A."/>
            <person name="Bahi-Buisson N."/>
            <person name="Fossoud C."/>
            <person name="Giuliano F."/>
            <person name="Colleaux L."/>
            <person name="Burglen L."/>
            <person name="Gleeson J.G."/>
            <person name="Boddaert N."/>
            <person name="Saiardi A."/>
            <person name="Cantagrel V."/>
        </authorList>
    </citation>
    <scope>FUNCTION</scope>
    <scope>DISRUPTION PHENOTYPE</scope>
</reference>
<comment type="function">
    <text evidence="1 4 5 6">Multiple inositol polyphosphate phosphatase that hydrolyzes 1D-myo-inositol 1,3,4,5,6-pentakisphosphate (InsP5[2OH]) and 1D-myo-inositol hexakisphosphate (InsP6) to a range of less phosphorylated inositol phosphates. This regulates the availability of these various small molecule second messengers and metal chelators which control many aspects of cell physiology (PubMed:10087200, PubMed:10938126). Has a weak in vitro activity towards 1D-myo-inositol 1,4,5-trisphosphate which is unlikely to be physiologically relevant. By regulating intracellular inositol polyphosphates pools, which act as metal chelators, it may control the availability of intracellular calcium and iron, which are important for proper neuronal development and homeostasis (PubMed:33257696). May have a dual substrate specificity, and function as a 2,3-bisphosphoglycerate 3-phosphatase hydrolyzing 2,3-bisphosphoglycerate to 2-phosphoglycerate. 2,3-bisphosphoglycerate (BPG) is formed as part of the Rapoport-Luebering glycolytic bypass and is a regulator of systemic oxygen homeostasis as the major allosteric effector of hemoglobin (By similarity).</text>
</comment>
<comment type="catalytic activity">
    <reaction evidence="1">
        <text>1D-myo-inositol hexakisphosphate + H2O = 1D-myo-inositol 1,2,4,5,6-pentakisphosphate + phosphate</text>
        <dbReference type="Rhea" id="RHEA:16989"/>
        <dbReference type="ChEBI" id="CHEBI:15377"/>
        <dbReference type="ChEBI" id="CHEBI:43474"/>
        <dbReference type="ChEBI" id="CHEBI:57798"/>
        <dbReference type="ChEBI" id="CHEBI:58130"/>
        <dbReference type="EC" id="3.1.3.62"/>
    </reaction>
    <physiologicalReaction direction="left-to-right" evidence="1">
        <dbReference type="Rhea" id="RHEA:16990"/>
    </physiologicalReaction>
</comment>
<comment type="catalytic activity">
    <reaction evidence="1">
        <text>1D-myo-inositol 1,2,4,5,6-pentakisphosphate + H2O = 1D-myo-inositol 1,2,5,6-tetrakisphosphate + phosphate</text>
        <dbReference type="Rhea" id="RHEA:77115"/>
        <dbReference type="ChEBI" id="CHEBI:15377"/>
        <dbReference type="ChEBI" id="CHEBI:43474"/>
        <dbReference type="ChEBI" id="CHEBI:57798"/>
        <dbReference type="ChEBI" id="CHEBI:195535"/>
        <dbReference type="EC" id="3.1.3.62"/>
    </reaction>
    <physiologicalReaction direction="left-to-right" evidence="1">
        <dbReference type="Rhea" id="RHEA:77116"/>
    </physiologicalReaction>
</comment>
<comment type="catalytic activity">
    <reaction evidence="1">
        <text>1D-myo-inositol 1,2,5,6-tetrakisphosphate + H2O = 1D-myo-inositol 1,2,6-trisphosphate + phosphate</text>
        <dbReference type="Rhea" id="RHEA:77119"/>
        <dbReference type="ChEBI" id="CHEBI:15377"/>
        <dbReference type="ChEBI" id="CHEBI:43474"/>
        <dbReference type="ChEBI" id="CHEBI:195535"/>
        <dbReference type="ChEBI" id="CHEBI:195537"/>
        <dbReference type="EC" id="3.1.3.62"/>
    </reaction>
    <physiologicalReaction direction="left-to-right" evidence="1">
        <dbReference type="Rhea" id="RHEA:77120"/>
    </physiologicalReaction>
</comment>
<comment type="catalytic activity">
    <reaction evidence="1">
        <text>1D-myo-inositol 1,2,6-trisphosphate + H2O = 1D-myo-inositol 1,2-bisphosphate + phosphate</text>
        <dbReference type="Rhea" id="RHEA:77131"/>
        <dbReference type="ChEBI" id="CHEBI:15377"/>
        <dbReference type="ChEBI" id="CHEBI:43474"/>
        <dbReference type="ChEBI" id="CHEBI:195537"/>
        <dbReference type="ChEBI" id="CHEBI:195539"/>
        <dbReference type="EC" id="3.1.3.62"/>
    </reaction>
    <physiologicalReaction direction="left-to-right" evidence="1">
        <dbReference type="Rhea" id="RHEA:77132"/>
    </physiologicalReaction>
</comment>
<comment type="catalytic activity">
    <reaction evidence="1">
        <text>1D-myo-inositol 1,2-bisphosphate + H2O = 1D-myo-inositol 2-phosphate + phosphate</text>
        <dbReference type="Rhea" id="RHEA:77135"/>
        <dbReference type="ChEBI" id="CHEBI:15377"/>
        <dbReference type="ChEBI" id="CHEBI:43474"/>
        <dbReference type="ChEBI" id="CHEBI:84142"/>
        <dbReference type="ChEBI" id="CHEBI:195539"/>
        <dbReference type="EC" id="3.1.3.62"/>
    </reaction>
    <physiologicalReaction direction="left-to-right" evidence="1">
        <dbReference type="Rhea" id="RHEA:77136"/>
    </physiologicalReaction>
</comment>
<comment type="catalytic activity">
    <reaction evidence="1">
        <text>1D-myo-inositol hexakisphosphate + H2O = 1D-myo-inositol 1,2,3,5,6-pentakisphosphate + phosphate</text>
        <dbReference type="Rhea" id="RHEA:20960"/>
        <dbReference type="ChEBI" id="CHEBI:15377"/>
        <dbReference type="ChEBI" id="CHEBI:43474"/>
        <dbReference type="ChEBI" id="CHEBI:58130"/>
        <dbReference type="ChEBI" id="CHEBI:58747"/>
    </reaction>
    <physiologicalReaction direction="left-to-right" evidence="1">
        <dbReference type="Rhea" id="RHEA:20961"/>
    </physiologicalReaction>
</comment>
<comment type="catalytic activity">
    <reaction evidence="1">
        <text>1D-myo-inositol 1,2,3,5,6-pentakisphosphate + H2O = 1D-myo-inositol 1,2,3,6-tetrakisphosphate + phosphate</text>
        <dbReference type="Rhea" id="RHEA:77111"/>
        <dbReference type="ChEBI" id="CHEBI:15377"/>
        <dbReference type="ChEBI" id="CHEBI:43474"/>
        <dbReference type="ChEBI" id="CHEBI:58747"/>
        <dbReference type="ChEBI" id="CHEBI:195534"/>
    </reaction>
    <physiologicalReaction direction="left-to-right" evidence="1">
        <dbReference type="Rhea" id="RHEA:77112"/>
    </physiologicalReaction>
</comment>
<comment type="catalytic activity">
    <reaction evidence="1">
        <text>1D-myo-inositol 1,2,3,6-tetrakisphosphate + H2O = 1D-myo-inositol 1,2,3-trisphosphate + phosphate</text>
        <dbReference type="Rhea" id="RHEA:77123"/>
        <dbReference type="ChEBI" id="CHEBI:15377"/>
        <dbReference type="ChEBI" id="CHEBI:43474"/>
        <dbReference type="ChEBI" id="CHEBI:195534"/>
        <dbReference type="ChEBI" id="CHEBI:195536"/>
    </reaction>
    <physiologicalReaction direction="left-to-right" evidence="1">
        <dbReference type="Rhea" id="RHEA:77124"/>
    </physiologicalReaction>
</comment>
<comment type="catalytic activity">
    <reaction evidence="1">
        <text>1D-myo-inositol 1,2,3-trisphosphate + H2O = 1D-myo-inositol 2,3-bisphosphate + phosphate</text>
        <dbReference type="Rhea" id="RHEA:77127"/>
        <dbReference type="ChEBI" id="CHEBI:15377"/>
        <dbReference type="ChEBI" id="CHEBI:43474"/>
        <dbReference type="ChEBI" id="CHEBI:195536"/>
        <dbReference type="ChEBI" id="CHEBI:195538"/>
    </reaction>
    <physiologicalReaction direction="left-to-right" evidence="1">
        <dbReference type="Rhea" id="RHEA:77128"/>
    </physiologicalReaction>
</comment>
<comment type="catalytic activity">
    <reaction evidence="1">
        <text>1D-myo-inositol 2,3-bisphosphate + H2O = 1D-myo-inositol 2-phosphate + phosphate</text>
        <dbReference type="Rhea" id="RHEA:77139"/>
        <dbReference type="ChEBI" id="CHEBI:15377"/>
        <dbReference type="ChEBI" id="CHEBI:43474"/>
        <dbReference type="ChEBI" id="CHEBI:84142"/>
        <dbReference type="ChEBI" id="CHEBI:195538"/>
    </reaction>
    <physiologicalReaction direction="left-to-right" evidence="1">
        <dbReference type="Rhea" id="RHEA:77140"/>
    </physiologicalReaction>
</comment>
<comment type="catalytic activity">
    <reaction evidence="1">
        <text>1D-myo-inositol 1,3,4,5,6-pentakisphosphate + H2O = 1D-myo-inositol 1,4,5,6-tetrakisphosphate + phosphate</text>
        <dbReference type="Rhea" id="RHEA:77143"/>
        <dbReference type="ChEBI" id="CHEBI:15377"/>
        <dbReference type="ChEBI" id="CHEBI:43474"/>
        <dbReference type="ChEBI" id="CHEBI:57627"/>
        <dbReference type="ChEBI" id="CHEBI:57733"/>
    </reaction>
    <physiologicalReaction direction="left-to-right" evidence="1">
        <dbReference type="Rhea" id="RHEA:77144"/>
    </physiologicalReaction>
</comment>
<comment type="catalytic activity">
    <reaction evidence="1">
        <text>1D-myo-inositol 1,4,5,6-tetrakisphosphate + H2O = 1D-myo-inositol 1,4,5-trisphosphate + phosphate</text>
        <dbReference type="Rhea" id="RHEA:77147"/>
        <dbReference type="ChEBI" id="CHEBI:15377"/>
        <dbReference type="ChEBI" id="CHEBI:43474"/>
        <dbReference type="ChEBI" id="CHEBI:57627"/>
        <dbReference type="ChEBI" id="CHEBI:203600"/>
    </reaction>
    <physiologicalReaction direction="left-to-right" evidence="1">
        <dbReference type="Rhea" id="RHEA:77148"/>
    </physiologicalReaction>
</comment>
<comment type="catalytic activity">
    <reaction evidence="1">
        <text>(2R)-2,3-bisphosphoglycerate + H2O = (2R)-2-phosphoglycerate + phosphate</text>
        <dbReference type="Rhea" id="RHEA:27381"/>
        <dbReference type="ChEBI" id="CHEBI:15377"/>
        <dbReference type="ChEBI" id="CHEBI:43474"/>
        <dbReference type="ChEBI" id="CHEBI:58248"/>
        <dbReference type="ChEBI" id="CHEBI:58289"/>
        <dbReference type="EC" id="3.1.3.80"/>
    </reaction>
    <physiologicalReaction direction="left-to-right" evidence="1">
        <dbReference type="Rhea" id="RHEA:27382"/>
    </physiologicalReaction>
</comment>
<comment type="subcellular location">
    <subcellularLocation>
        <location evidence="5">Endoplasmic reticulum lumen</location>
    </subcellularLocation>
    <subcellularLocation>
        <location evidence="1">Secreted</location>
    </subcellularLocation>
    <subcellularLocation>
        <location evidence="5">Cell membrane</location>
    </subcellularLocation>
    <text evidence="5">Also associated with the plasma membrane in erythrocytes.</text>
</comment>
<comment type="tissue specificity">
    <text evidence="4">Widely expressed with highest levels in kidney, intestine, thymus and liver.</text>
</comment>
<comment type="developmental stage">
    <text evidence="5">Expressed in different stages of embryogenesis, from 7.5 dpc through 14.5 dpc. The highest levels of expression is found in the visceral endoderm at 7.5 dpc and 8.5 dpc and in the fetal liver at 12.5 dpc and 14.5 dpc.</text>
</comment>
<comment type="PTM">
    <text evidence="1">N-glycosylated.</text>
</comment>
<comment type="disruption phenotype">
    <text evidence="5 6">Knockout mice are born at Mendelian ratio and are fertile. Although brain histology does not identify major differences in cerebellar or cerebral cortex architecture, a mild, but significant 10% decrease in the brain weight was identified associated with a reduced cortical thickness in homozygous mutant mice at postnatal day 21 (PubMed:33257696). At 14.5 dpc, neural progenitors show a decrease of about one third in intracellular free Ca(2+) levels compared to wild-type progenitors (PubMed:33257696). Normal chondrocyte differentiation and bone development are observed (PubMed:10938126).</text>
</comment>
<comment type="similarity">
    <text evidence="8">Belongs to the histidine acid phosphatase family. MINPP1 subfamily.</text>
</comment>
<comment type="sequence caution" evidence="8">
    <conflict type="frameshift">
        <sequence resource="EMBL-CDS" id="BAA95058"/>
    </conflict>
</comment>
<gene>
    <name evidence="11" type="primary">Minpp1</name>
    <name evidence="7" type="synonym">Mipp</name>
    <name evidence="10" type="ORF">MNCb-1572</name>
</gene>
<protein>
    <recommendedName>
        <fullName evidence="9">Multiple inositol polyphosphate phosphatase 1</fullName>
        <ecNumber evidence="4 5">3.1.3.62</ecNumber>
    </recommendedName>
    <alternativeName>
        <fullName evidence="1">2,3-bisphosphoglycerate 3-phosphatase</fullName>
        <shortName evidence="1">2,3-BPG phosphatase</shortName>
        <ecNumber evidence="1">3.1.3.80</ecNumber>
    </alternativeName>
</protein>
<feature type="signal peptide" evidence="2">
    <location>
        <begin position="1"/>
        <end position="30"/>
    </location>
</feature>
<feature type="chain" id="PRO_0000019583" description="Multiple inositol polyphosphate phosphatase 1">
    <location>
        <begin position="31"/>
        <end position="481"/>
    </location>
</feature>
<feature type="short sequence motif" description="Prevents secretion from ER" evidence="3 5">
    <location>
        <begin position="478"/>
        <end position="481"/>
    </location>
</feature>
<feature type="active site" evidence="9">
    <location>
        <position position="89"/>
    </location>
</feature>
<feature type="glycosylation site" description="N-linked (GlcNAc...) asparagine" evidence="2">
    <location>
        <position position="236"/>
    </location>
</feature>
<feature type="glycosylation site" description="N-linked (GlcNAc...) asparagine" evidence="2">
    <location>
        <position position="475"/>
    </location>
</feature>
<feature type="mutagenesis site" description="Loss of phosphatase inositol phosphate phosphatase activity." evidence="4 5">
    <original>H</original>
    <variation>A</variation>
    <location>
        <position position="89"/>
    </location>
</feature>
<feature type="sequence conflict" description="In Ref. 4; AAH21437." evidence="8" ref="4">
    <original>G</original>
    <variation>D</variation>
    <location>
        <position position="211"/>
    </location>
</feature>
<feature type="sequence conflict" description="In Ref. 4; AAH21437." evidence="8" ref="4">
    <original>K</original>
    <variation>Q</variation>
    <location>
        <position position="257"/>
    </location>
</feature>
<feature type="sequence conflict" description="In Ref. 4; AAH21437." evidence="8" ref="4">
    <original>M</original>
    <variation>V</variation>
    <location>
        <position position="267"/>
    </location>
</feature>
<evidence type="ECO:0000250" key="1">
    <source>
        <dbReference type="UniProtKB" id="Q9UNW1"/>
    </source>
</evidence>
<evidence type="ECO:0000255" key="2"/>
<evidence type="ECO:0000255" key="3">
    <source>
        <dbReference type="PROSITE-ProRule" id="PRU10138"/>
    </source>
</evidence>
<evidence type="ECO:0000269" key="4">
    <source>
    </source>
</evidence>
<evidence type="ECO:0000269" key="5">
    <source>
    </source>
</evidence>
<evidence type="ECO:0000269" key="6">
    <source>
    </source>
</evidence>
<evidence type="ECO:0000303" key="7">
    <source>
    </source>
</evidence>
<evidence type="ECO:0000305" key="8"/>
<evidence type="ECO:0000305" key="9">
    <source>
    </source>
</evidence>
<evidence type="ECO:0000312" key="10">
    <source>
        <dbReference type="EMBL" id="BAA95058.1"/>
    </source>
</evidence>
<evidence type="ECO:0000312" key="11">
    <source>
        <dbReference type="MGI" id="MGI:1336159"/>
    </source>
</evidence>
<name>MINP1_MOUSE</name>
<organism>
    <name type="scientific">Mus musculus</name>
    <name type="common">Mouse</name>
    <dbReference type="NCBI Taxonomy" id="10090"/>
    <lineage>
        <taxon>Eukaryota</taxon>
        <taxon>Metazoa</taxon>
        <taxon>Chordata</taxon>
        <taxon>Craniata</taxon>
        <taxon>Vertebrata</taxon>
        <taxon>Euteleostomi</taxon>
        <taxon>Mammalia</taxon>
        <taxon>Eutheria</taxon>
        <taxon>Euarchontoglires</taxon>
        <taxon>Glires</taxon>
        <taxon>Rodentia</taxon>
        <taxon>Myomorpha</taxon>
        <taxon>Muroidea</taxon>
        <taxon>Muridae</taxon>
        <taxon>Murinae</taxon>
        <taxon>Mus</taxon>
        <taxon>Mus</taxon>
    </lineage>
</organism>
<sequence length="481" mass="54537">MLRGARSHLPASVAPAAVLAAALLSSFARCSLPGRGDPVASVLSPYFGTKTRYEDANPWLLVDPVAPRRDPELLAGTCTPVQLVALIRHGTRYPTTKQIRKLKQLQGLLQTRESRDGGSQVAAALAEWPLWYGDWMDGQLVEKGRQDMRQLALRLAALFPDLFSRENYDRLRLITSSKHRCVDSSAAFLQGLWQHYHPGLPPPDVSDMECGPPRINDKLMRFFDHCEKFLTDVERNETALYHVEAFKTGPEMQKVLKKVAATLQVPMNSLNADLIQVAFFTCSFDLAIKGVHSPWCDVFDVDDARVLEYLNDLKQYWKRSYGYTINSRSSCNLFQDIFLHLDKAVEQKQRSQPVSSPVILQFGHAETLLPLLSLMGYFKDKEPLTAYNFEEQVNRKFRSGHIVPYASNLIFVLYHCDNAQSPEEQFQIQLLLNEKVLPLAHSQRPVGLYEELKTHYRDILQSCQTSKECSPPKANITSDEL</sequence>